<proteinExistence type="inferred from homology"/>
<dbReference type="EC" id="2.4.2.18" evidence="1"/>
<dbReference type="EMBL" id="BA000019">
    <property type="protein sequence ID" value="BAB72367.1"/>
    <property type="molecule type" value="Genomic_DNA"/>
</dbReference>
<dbReference type="PIR" id="AH1857">
    <property type="entry name" value="AH1857"/>
</dbReference>
<dbReference type="SMR" id="Q8YZP8"/>
<dbReference type="STRING" id="103690.gene:10492418"/>
<dbReference type="KEGG" id="ana:all0409"/>
<dbReference type="eggNOG" id="COG0547">
    <property type="taxonomic scope" value="Bacteria"/>
</dbReference>
<dbReference type="OrthoDB" id="9806430at2"/>
<dbReference type="UniPathway" id="UPA00035">
    <property type="reaction ID" value="UER00041"/>
</dbReference>
<dbReference type="Proteomes" id="UP000002483">
    <property type="component" value="Chromosome"/>
</dbReference>
<dbReference type="GO" id="GO:0005829">
    <property type="term" value="C:cytosol"/>
    <property type="evidence" value="ECO:0007669"/>
    <property type="project" value="TreeGrafter"/>
</dbReference>
<dbReference type="GO" id="GO:0004048">
    <property type="term" value="F:anthranilate phosphoribosyltransferase activity"/>
    <property type="evidence" value="ECO:0007669"/>
    <property type="project" value="UniProtKB-UniRule"/>
</dbReference>
<dbReference type="GO" id="GO:0000287">
    <property type="term" value="F:magnesium ion binding"/>
    <property type="evidence" value="ECO:0007669"/>
    <property type="project" value="UniProtKB-UniRule"/>
</dbReference>
<dbReference type="GO" id="GO:0000162">
    <property type="term" value="P:L-tryptophan biosynthetic process"/>
    <property type="evidence" value="ECO:0007669"/>
    <property type="project" value="UniProtKB-UniRule"/>
</dbReference>
<dbReference type="FunFam" id="3.40.1030.10:FF:000002">
    <property type="entry name" value="Anthranilate phosphoribosyltransferase"/>
    <property type="match status" value="1"/>
</dbReference>
<dbReference type="Gene3D" id="3.40.1030.10">
    <property type="entry name" value="Nucleoside phosphorylase/phosphoribosyltransferase catalytic domain"/>
    <property type="match status" value="1"/>
</dbReference>
<dbReference type="Gene3D" id="1.20.970.10">
    <property type="entry name" value="Transferase, Pyrimidine Nucleoside Phosphorylase, Chain C"/>
    <property type="match status" value="1"/>
</dbReference>
<dbReference type="HAMAP" id="MF_00211">
    <property type="entry name" value="TrpD"/>
    <property type="match status" value="1"/>
</dbReference>
<dbReference type="InterPro" id="IPR005940">
    <property type="entry name" value="Anthranilate_Pribosyl_Tfrase"/>
</dbReference>
<dbReference type="InterPro" id="IPR000312">
    <property type="entry name" value="Glycosyl_Trfase_fam3"/>
</dbReference>
<dbReference type="InterPro" id="IPR017459">
    <property type="entry name" value="Glycosyl_Trfase_fam3_N_dom"/>
</dbReference>
<dbReference type="InterPro" id="IPR036320">
    <property type="entry name" value="Glycosyl_Trfase_fam3_N_dom_sf"/>
</dbReference>
<dbReference type="InterPro" id="IPR035902">
    <property type="entry name" value="Nuc_phospho_transferase"/>
</dbReference>
<dbReference type="NCBIfam" id="TIGR01245">
    <property type="entry name" value="trpD"/>
    <property type="match status" value="1"/>
</dbReference>
<dbReference type="PANTHER" id="PTHR43285">
    <property type="entry name" value="ANTHRANILATE PHOSPHORIBOSYLTRANSFERASE"/>
    <property type="match status" value="1"/>
</dbReference>
<dbReference type="PANTHER" id="PTHR43285:SF2">
    <property type="entry name" value="ANTHRANILATE PHOSPHORIBOSYLTRANSFERASE"/>
    <property type="match status" value="1"/>
</dbReference>
<dbReference type="Pfam" id="PF02885">
    <property type="entry name" value="Glycos_trans_3N"/>
    <property type="match status" value="1"/>
</dbReference>
<dbReference type="Pfam" id="PF00591">
    <property type="entry name" value="Glycos_transf_3"/>
    <property type="match status" value="1"/>
</dbReference>
<dbReference type="SUPFAM" id="SSF52418">
    <property type="entry name" value="Nucleoside phosphorylase/phosphoribosyltransferase catalytic domain"/>
    <property type="match status" value="1"/>
</dbReference>
<dbReference type="SUPFAM" id="SSF47648">
    <property type="entry name" value="Nucleoside phosphorylase/phosphoribosyltransferase N-terminal domain"/>
    <property type="match status" value="1"/>
</dbReference>
<accession>Q8YZP8</accession>
<reference key="1">
    <citation type="journal article" date="2001" name="DNA Res.">
        <title>Complete genomic sequence of the filamentous nitrogen-fixing cyanobacterium Anabaena sp. strain PCC 7120.</title>
        <authorList>
            <person name="Kaneko T."/>
            <person name="Nakamura Y."/>
            <person name="Wolk C.P."/>
            <person name="Kuritz T."/>
            <person name="Sasamoto S."/>
            <person name="Watanabe A."/>
            <person name="Iriguchi M."/>
            <person name="Ishikawa A."/>
            <person name="Kawashima K."/>
            <person name="Kimura T."/>
            <person name="Kishida Y."/>
            <person name="Kohara M."/>
            <person name="Matsumoto M."/>
            <person name="Matsuno A."/>
            <person name="Muraki A."/>
            <person name="Nakazaki N."/>
            <person name="Shimpo S."/>
            <person name="Sugimoto M."/>
            <person name="Takazawa M."/>
            <person name="Yamada M."/>
            <person name="Yasuda M."/>
            <person name="Tabata S."/>
        </authorList>
    </citation>
    <scope>NUCLEOTIDE SEQUENCE [LARGE SCALE GENOMIC DNA]</scope>
    <source>
        <strain>PCC 7120 / SAG 25.82 / UTEX 2576</strain>
    </source>
</reference>
<keyword id="KW-0028">Amino-acid biosynthesis</keyword>
<keyword id="KW-0057">Aromatic amino acid biosynthesis</keyword>
<keyword id="KW-0328">Glycosyltransferase</keyword>
<keyword id="KW-0460">Magnesium</keyword>
<keyword id="KW-0479">Metal-binding</keyword>
<keyword id="KW-1185">Reference proteome</keyword>
<keyword id="KW-0808">Transferase</keyword>
<keyword id="KW-0822">Tryptophan biosynthesis</keyword>
<gene>
    <name evidence="1" type="primary">trpD1</name>
    <name type="ordered locus">all0409</name>
</gene>
<sequence length="364" mass="37967">MVAVTQTPLDNISVTPDSNDWSAILQQLLKRQSLTVAQATDLMQGWLTDTIPPVLSGAILAAIQAKGVSSEELVGMARVLQSQSSYSPPHSPFPTPLIDTCGTGGDGASTFNISTAVAFVAAAAGVKVAKHGNRSASSKTGSADVLEALGINLNANADKVQAAVSEVGITFLFAPGWHPALKTVATLRKTLKVRTIFNLLGPLVNPLRPTGQIIGVNDPLLIEEIALALSHLGCRKAIALHGRERLDEAGLADVTDLAILQDGKVSCLALNPQELGLNHAPTEVLRGGDVAENAEILKAILQGKGTQAQQDVVALNTALALQVGEAITTTDIVEGCVKGIAIAREVLQSGAAWTKLEQLAEFLR</sequence>
<feature type="chain" id="PRO_0000154419" description="Anthranilate phosphoribosyltransferase 1">
    <location>
        <begin position="1"/>
        <end position="364"/>
    </location>
</feature>
<feature type="binding site" evidence="1">
    <location>
        <position position="102"/>
    </location>
    <ligand>
        <name>5-phospho-alpha-D-ribose 1-diphosphate</name>
        <dbReference type="ChEBI" id="CHEBI:58017"/>
    </ligand>
</feature>
<feature type="binding site" evidence="1">
    <location>
        <position position="102"/>
    </location>
    <ligand>
        <name>anthranilate</name>
        <dbReference type="ChEBI" id="CHEBI:16567"/>
        <label>1</label>
    </ligand>
</feature>
<feature type="binding site" evidence="1">
    <location>
        <begin position="105"/>
        <end position="106"/>
    </location>
    <ligand>
        <name>5-phospho-alpha-D-ribose 1-diphosphate</name>
        <dbReference type="ChEBI" id="CHEBI:58017"/>
    </ligand>
</feature>
<feature type="binding site" evidence="1">
    <location>
        <position position="110"/>
    </location>
    <ligand>
        <name>5-phospho-alpha-D-ribose 1-diphosphate</name>
        <dbReference type="ChEBI" id="CHEBI:58017"/>
    </ligand>
</feature>
<feature type="binding site" evidence="1">
    <location>
        <begin position="112"/>
        <end position="115"/>
    </location>
    <ligand>
        <name>5-phospho-alpha-D-ribose 1-diphosphate</name>
        <dbReference type="ChEBI" id="CHEBI:58017"/>
    </ligand>
</feature>
<feature type="binding site" evidence="1">
    <location>
        <position position="114"/>
    </location>
    <ligand>
        <name>Mg(2+)</name>
        <dbReference type="ChEBI" id="CHEBI:18420"/>
        <label>1</label>
    </ligand>
</feature>
<feature type="binding site" evidence="1">
    <location>
        <begin position="130"/>
        <end position="138"/>
    </location>
    <ligand>
        <name>5-phospho-alpha-D-ribose 1-diphosphate</name>
        <dbReference type="ChEBI" id="CHEBI:58017"/>
    </ligand>
</feature>
<feature type="binding site" evidence="1">
    <location>
        <position position="133"/>
    </location>
    <ligand>
        <name>anthranilate</name>
        <dbReference type="ChEBI" id="CHEBI:16567"/>
        <label>1</label>
    </ligand>
</feature>
<feature type="binding site" evidence="1">
    <location>
        <position position="142"/>
    </location>
    <ligand>
        <name>5-phospho-alpha-D-ribose 1-diphosphate</name>
        <dbReference type="ChEBI" id="CHEBI:58017"/>
    </ligand>
</feature>
<feature type="binding site" evidence="1">
    <location>
        <position position="188"/>
    </location>
    <ligand>
        <name>anthranilate</name>
        <dbReference type="ChEBI" id="CHEBI:16567"/>
        <label>2</label>
    </ligand>
</feature>
<feature type="binding site" evidence="1">
    <location>
        <position position="247"/>
    </location>
    <ligand>
        <name>Mg(2+)</name>
        <dbReference type="ChEBI" id="CHEBI:18420"/>
        <label>2</label>
    </ligand>
</feature>
<feature type="binding site" evidence="1">
    <location>
        <position position="248"/>
    </location>
    <ligand>
        <name>Mg(2+)</name>
        <dbReference type="ChEBI" id="CHEBI:18420"/>
        <label>1</label>
    </ligand>
</feature>
<feature type="binding site" evidence="1">
    <location>
        <position position="248"/>
    </location>
    <ligand>
        <name>Mg(2+)</name>
        <dbReference type="ChEBI" id="CHEBI:18420"/>
        <label>2</label>
    </ligand>
</feature>
<organism>
    <name type="scientific">Nostoc sp. (strain PCC 7120 / SAG 25.82 / UTEX 2576)</name>
    <dbReference type="NCBI Taxonomy" id="103690"/>
    <lineage>
        <taxon>Bacteria</taxon>
        <taxon>Bacillati</taxon>
        <taxon>Cyanobacteriota</taxon>
        <taxon>Cyanophyceae</taxon>
        <taxon>Nostocales</taxon>
        <taxon>Nostocaceae</taxon>
        <taxon>Nostoc</taxon>
    </lineage>
</organism>
<name>TRPD1_NOSS1</name>
<evidence type="ECO:0000255" key="1">
    <source>
        <dbReference type="HAMAP-Rule" id="MF_00211"/>
    </source>
</evidence>
<comment type="function">
    <text evidence="1">Catalyzes the transfer of the phosphoribosyl group of 5-phosphorylribose-1-pyrophosphate (PRPP) to anthranilate to yield N-(5'-phosphoribosyl)-anthranilate (PRA).</text>
</comment>
<comment type="catalytic activity">
    <reaction evidence="1">
        <text>N-(5-phospho-beta-D-ribosyl)anthranilate + diphosphate = 5-phospho-alpha-D-ribose 1-diphosphate + anthranilate</text>
        <dbReference type="Rhea" id="RHEA:11768"/>
        <dbReference type="ChEBI" id="CHEBI:16567"/>
        <dbReference type="ChEBI" id="CHEBI:18277"/>
        <dbReference type="ChEBI" id="CHEBI:33019"/>
        <dbReference type="ChEBI" id="CHEBI:58017"/>
        <dbReference type="EC" id="2.4.2.18"/>
    </reaction>
</comment>
<comment type="cofactor">
    <cofactor evidence="1">
        <name>Mg(2+)</name>
        <dbReference type="ChEBI" id="CHEBI:18420"/>
    </cofactor>
    <text evidence="1">Binds 2 magnesium ions per monomer.</text>
</comment>
<comment type="pathway">
    <text evidence="1">Amino-acid biosynthesis; L-tryptophan biosynthesis; L-tryptophan from chorismate: step 2/5.</text>
</comment>
<comment type="subunit">
    <text evidence="1">Homodimer.</text>
</comment>
<comment type="similarity">
    <text evidence="1">Belongs to the anthranilate phosphoribosyltransferase family.</text>
</comment>
<protein>
    <recommendedName>
        <fullName evidence="1">Anthranilate phosphoribosyltransferase 1</fullName>
        <ecNumber evidence="1">2.4.2.18</ecNumber>
    </recommendedName>
</protein>